<gene>
    <name evidence="1" type="primary">dnaK</name>
    <name type="ordered locus">DICTH_1722</name>
</gene>
<evidence type="ECO:0000255" key="1">
    <source>
        <dbReference type="HAMAP-Rule" id="MF_00332"/>
    </source>
</evidence>
<evidence type="ECO:0000256" key="2">
    <source>
        <dbReference type="SAM" id="MobiDB-lite"/>
    </source>
</evidence>
<accession>B5YAR3</accession>
<name>DNAK_DICT6</name>
<dbReference type="EMBL" id="CP001146">
    <property type="protein sequence ID" value="ACI20053.1"/>
    <property type="molecule type" value="Genomic_DNA"/>
</dbReference>
<dbReference type="RefSeq" id="WP_012548685.1">
    <property type="nucleotide sequence ID" value="NC_011297.1"/>
</dbReference>
<dbReference type="SMR" id="B5YAR3"/>
<dbReference type="STRING" id="309799.DICTH_1722"/>
<dbReference type="PaxDb" id="309799-DICTH_1722"/>
<dbReference type="KEGG" id="dth:DICTH_1722"/>
<dbReference type="eggNOG" id="COG0443">
    <property type="taxonomic scope" value="Bacteria"/>
</dbReference>
<dbReference type="HOGENOM" id="CLU_005965_2_1_0"/>
<dbReference type="OrthoDB" id="9766019at2"/>
<dbReference type="Proteomes" id="UP000001733">
    <property type="component" value="Chromosome"/>
</dbReference>
<dbReference type="GO" id="GO:0005524">
    <property type="term" value="F:ATP binding"/>
    <property type="evidence" value="ECO:0007669"/>
    <property type="project" value="UniProtKB-UniRule"/>
</dbReference>
<dbReference type="GO" id="GO:0140662">
    <property type="term" value="F:ATP-dependent protein folding chaperone"/>
    <property type="evidence" value="ECO:0007669"/>
    <property type="project" value="InterPro"/>
</dbReference>
<dbReference type="GO" id="GO:0051082">
    <property type="term" value="F:unfolded protein binding"/>
    <property type="evidence" value="ECO:0007669"/>
    <property type="project" value="InterPro"/>
</dbReference>
<dbReference type="CDD" id="cd10234">
    <property type="entry name" value="ASKHA_NBD_HSP70_DnaK-like"/>
    <property type="match status" value="1"/>
</dbReference>
<dbReference type="FunFam" id="2.60.34.10:FF:000014">
    <property type="entry name" value="Chaperone protein DnaK HSP70"/>
    <property type="match status" value="1"/>
</dbReference>
<dbReference type="FunFam" id="1.20.1270.10:FF:000001">
    <property type="entry name" value="Molecular chaperone DnaK"/>
    <property type="match status" value="1"/>
</dbReference>
<dbReference type="FunFam" id="3.30.420.40:FF:000071">
    <property type="entry name" value="Molecular chaperone DnaK"/>
    <property type="match status" value="1"/>
</dbReference>
<dbReference type="FunFam" id="3.90.640.10:FF:000003">
    <property type="entry name" value="Molecular chaperone DnaK"/>
    <property type="match status" value="1"/>
</dbReference>
<dbReference type="Gene3D" id="1.20.1270.10">
    <property type="match status" value="1"/>
</dbReference>
<dbReference type="Gene3D" id="3.30.420.40">
    <property type="match status" value="2"/>
</dbReference>
<dbReference type="Gene3D" id="3.90.640.10">
    <property type="entry name" value="Actin, Chain A, domain 4"/>
    <property type="match status" value="1"/>
</dbReference>
<dbReference type="Gene3D" id="2.60.34.10">
    <property type="entry name" value="Substrate Binding Domain Of DNAk, Chain A, domain 1"/>
    <property type="match status" value="1"/>
</dbReference>
<dbReference type="HAMAP" id="MF_00332">
    <property type="entry name" value="DnaK"/>
    <property type="match status" value="1"/>
</dbReference>
<dbReference type="InterPro" id="IPR043129">
    <property type="entry name" value="ATPase_NBD"/>
</dbReference>
<dbReference type="InterPro" id="IPR012725">
    <property type="entry name" value="Chaperone_DnaK"/>
</dbReference>
<dbReference type="InterPro" id="IPR018181">
    <property type="entry name" value="Heat_shock_70_CS"/>
</dbReference>
<dbReference type="InterPro" id="IPR029048">
    <property type="entry name" value="HSP70_C_sf"/>
</dbReference>
<dbReference type="InterPro" id="IPR029047">
    <property type="entry name" value="HSP70_peptide-bd_sf"/>
</dbReference>
<dbReference type="InterPro" id="IPR013126">
    <property type="entry name" value="Hsp_70_fam"/>
</dbReference>
<dbReference type="NCBIfam" id="NF001413">
    <property type="entry name" value="PRK00290.1"/>
    <property type="match status" value="1"/>
</dbReference>
<dbReference type="NCBIfam" id="TIGR02350">
    <property type="entry name" value="prok_dnaK"/>
    <property type="match status" value="1"/>
</dbReference>
<dbReference type="PANTHER" id="PTHR19375">
    <property type="entry name" value="HEAT SHOCK PROTEIN 70KDA"/>
    <property type="match status" value="1"/>
</dbReference>
<dbReference type="Pfam" id="PF00012">
    <property type="entry name" value="HSP70"/>
    <property type="match status" value="1"/>
</dbReference>
<dbReference type="PRINTS" id="PR00301">
    <property type="entry name" value="HEATSHOCK70"/>
</dbReference>
<dbReference type="SUPFAM" id="SSF53067">
    <property type="entry name" value="Actin-like ATPase domain"/>
    <property type="match status" value="2"/>
</dbReference>
<dbReference type="SUPFAM" id="SSF100934">
    <property type="entry name" value="Heat shock protein 70kD (HSP70), C-terminal subdomain"/>
    <property type="match status" value="1"/>
</dbReference>
<dbReference type="SUPFAM" id="SSF100920">
    <property type="entry name" value="Heat shock protein 70kD (HSP70), peptide-binding domain"/>
    <property type="match status" value="1"/>
</dbReference>
<dbReference type="PROSITE" id="PS00297">
    <property type="entry name" value="HSP70_1"/>
    <property type="match status" value="1"/>
</dbReference>
<dbReference type="PROSITE" id="PS00329">
    <property type="entry name" value="HSP70_2"/>
    <property type="match status" value="1"/>
</dbReference>
<dbReference type="PROSITE" id="PS01036">
    <property type="entry name" value="HSP70_3"/>
    <property type="match status" value="1"/>
</dbReference>
<feature type="chain" id="PRO_1000119701" description="Chaperone protein DnaK">
    <location>
        <begin position="1"/>
        <end position="606"/>
    </location>
</feature>
<feature type="region of interest" description="Disordered" evidence="2">
    <location>
        <begin position="579"/>
        <end position="606"/>
    </location>
</feature>
<feature type="compositionally biased region" description="Polar residues" evidence="2">
    <location>
        <begin position="579"/>
        <end position="593"/>
    </location>
</feature>
<feature type="modified residue" description="Phosphothreonine; by autocatalysis" evidence="1">
    <location>
        <position position="174"/>
    </location>
</feature>
<keyword id="KW-0067">ATP-binding</keyword>
<keyword id="KW-0143">Chaperone</keyword>
<keyword id="KW-0547">Nucleotide-binding</keyword>
<keyword id="KW-0597">Phosphoprotein</keyword>
<keyword id="KW-0346">Stress response</keyword>
<comment type="function">
    <text evidence="1">Acts as a chaperone.</text>
</comment>
<comment type="induction">
    <text evidence="1">By stress conditions e.g. heat shock.</text>
</comment>
<comment type="similarity">
    <text evidence="1">Belongs to the heat shock protein 70 family.</text>
</comment>
<protein>
    <recommendedName>
        <fullName evidence="1">Chaperone protein DnaK</fullName>
    </recommendedName>
    <alternativeName>
        <fullName evidence="1">HSP70</fullName>
    </alternativeName>
    <alternativeName>
        <fullName evidence="1">Heat shock 70 kDa protein</fullName>
    </alternativeName>
    <alternativeName>
        <fullName evidence="1">Heat shock protein 70</fullName>
    </alternativeName>
</protein>
<proteinExistence type="inferred from homology"/>
<organism>
    <name type="scientific">Dictyoglomus thermophilum (strain ATCC 35947 / DSM 3960 / H-6-12)</name>
    <dbReference type="NCBI Taxonomy" id="309799"/>
    <lineage>
        <taxon>Bacteria</taxon>
        <taxon>Pseudomonadati</taxon>
        <taxon>Dictyoglomota</taxon>
        <taxon>Dictyoglomia</taxon>
        <taxon>Dictyoglomales</taxon>
        <taxon>Dictyoglomaceae</taxon>
        <taxon>Dictyoglomus</taxon>
    </lineage>
</organism>
<sequence length="606" mass="66797">MAKIVGIDLGTTNSLIAYLEGGRPTIIPNAEGSRLTPSVVAFTKDGQLLVGEPAKRQAIVNAERTIKSIKRHMGTNYKVKIDDKEYTPQEISAMILRKLKKDAEAYLGEPIEKAVITVPAYFSDAQRQATKDAGAIAGLEVVRIINEPTAAALAYGLDKEGHQKILVFDLGGGTFDVSILEIGEGVFEVIATAGNNRLGGDDFDERIVNWLVEMFMEEHGINLKEDRTALQRLFEAAEKAKIELSSKLQTEINLPFIAMKGNTPLHISVTLTRAKFEELTYDLVEKTKEPTERALKDAGLSPSQIDKIILVGGATRMPCIQEWIKKHFGKEPQRNVNPDEAVALGAAIQAGVIGGEIRDIVLVDVTPLSLGIETLGGVFTKIIERNTPIPVSKSQIFTTAADYQTSVEIHVLQGERALAKDNISLGRFILDGIPPAPRGVPQIEVTFDIDVNGIVHVSARDKATGREQRITISNAIRLSEEEIKRMTEEAKRFEEEDRKRREEIETKNQAEHLIYTARKTLKDYGDKVSKDLVQRVEDKIKNLEELIKPERINVEQVKKGMEELTQALGEIGQFMYQSASAAGNPGQGQTNENPGGKTIDGDYKVN</sequence>
<reference key="1">
    <citation type="journal article" date="2014" name="Genome Announc.">
        <title>Complete Genome Sequence of the Extreme Thermophile Dictyoglomus thermophilum H-6-12.</title>
        <authorList>
            <person name="Coil D.A."/>
            <person name="Badger J.H."/>
            <person name="Forberger H.C."/>
            <person name="Riggs F."/>
            <person name="Madupu R."/>
            <person name="Fedorova N."/>
            <person name="Ward N."/>
            <person name="Robb F.T."/>
            <person name="Eisen J.A."/>
        </authorList>
    </citation>
    <scope>NUCLEOTIDE SEQUENCE [LARGE SCALE GENOMIC DNA]</scope>
    <source>
        <strain>ATCC 35947 / DSM 3960 / H-6-12</strain>
    </source>
</reference>